<protein>
    <recommendedName>
        <fullName evidence="1">Coenzyme PQQ synthesis protein B</fullName>
    </recommendedName>
    <alternativeName>
        <fullName evidence="1">Pyrroloquinoline quinone biosynthesis protein B</fullName>
    </alternativeName>
</protein>
<feature type="chain" id="PRO_1000131168" description="Coenzyme PQQ synthesis protein B">
    <location>
        <begin position="1"/>
        <end position="303"/>
    </location>
</feature>
<accession>B1JDZ7</accession>
<evidence type="ECO:0000255" key="1">
    <source>
        <dbReference type="HAMAP-Rule" id="MF_00653"/>
    </source>
</evidence>
<gene>
    <name evidence="1" type="primary">pqqB</name>
    <name type="ordered locus">PputW619_4824</name>
</gene>
<proteinExistence type="inferred from homology"/>
<keyword id="KW-0884">PQQ biosynthesis</keyword>
<keyword id="KW-0813">Transport</keyword>
<reference key="1">
    <citation type="submission" date="2008-02" db="EMBL/GenBank/DDBJ databases">
        <title>Complete sequence of Pseudomonas putida W619.</title>
        <authorList>
            <person name="Copeland A."/>
            <person name="Lucas S."/>
            <person name="Lapidus A."/>
            <person name="Barry K."/>
            <person name="Detter J.C."/>
            <person name="Glavina del Rio T."/>
            <person name="Dalin E."/>
            <person name="Tice H."/>
            <person name="Pitluck S."/>
            <person name="Chain P."/>
            <person name="Malfatti S."/>
            <person name="Shin M."/>
            <person name="Vergez L."/>
            <person name="Schmutz J."/>
            <person name="Larimer F."/>
            <person name="Land M."/>
            <person name="Hauser L."/>
            <person name="Kyrpides N."/>
            <person name="Kim E."/>
            <person name="Taghavi S."/>
            <person name="Vangronsveld D."/>
            <person name="van der Lelie D."/>
            <person name="Richardson P."/>
        </authorList>
    </citation>
    <scope>NUCLEOTIDE SEQUENCE [LARGE SCALE GENOMIC DNA]</scope>
    <source>
        <strain>W619</strain>
    </source>
</reference>
<organism>
    <name type="scientific">Pseudomonas putida (strain W619)</name>
    <dbReference type="NCBI Taxonomy" id="390235"/>
    <lineage>
        <taxon>Bacteria</taxon>
        <taxon>Pseudomonadati</taxon>
        <taxon>Pseudomonadota</taxon>
        <taxon>Gammaproteobacteria</taxon>
        <taxon>Pseudomonadales</taxon>
        <taxon>Pseudomonadaceae</taxon>
        <taxon>Pseudomonas</taxon>
    </lineage>
</organism>
<name>PQQB_PSEPW</name>
<comment type="function">
    <text evidence="1">May be involved in the transport of PQQ or its precursor to the periplasm.</text>
</comment>
<comment type="pathway">
    <text evidence="1">Cofactor biosynthesis; pyrroloquinoline quinone biosynthesis.</text>
</comment>
<comment type="similarity">
    <text evidence="1">Belongs to the PqqB family.</text>
</comment>
<dbReference type="EMBL" id="CP000949">
    <property type="protein sequence ID" value="ACA75300.1"/>
    <property type="molecule type" value="Genomic_DNA"/>
</dbReference>
<dbReference type="SMR" id="B1JDZ7"/>
<dbReference type="STRING" id="390235.PputW619_4824"/>
<dbReference type="KEGG" id="ppw:PputW619_4824"/>
<dbReference type="eggNOG" id="COG1235">
    <property type="taxonomic scope" value="Bacteria"/>
</dbReference>
<dbReference type="HOGENOM" id="CLU_061120_0_0_6"/>
<dbReference type="OrthoDB" id="9778305at2"/>
<dbReference type="UniPathway" id="UPA00539"/>
<dbReference type="GO" id="GO:0018189">
    <property type="term" value="P:pyrroloquinoline quinone biosynthetic process"/>
    <property type="evidence" value="ECO:0007669"/>
    <property type="project" value="UniProtKB-UniRule"/>
</dbReference>
<dbReference type="CDD" id="cd16274">
    <property type="entry name" value="PQQB-like_MBL-fold"/>
    <property type="match status" value="1"/>
</dbReference>
<dbReference type="Gene3D" id="3.60.15.10">
    <property type="entry name" value="Ribonuclease Z/Hydroxyacylglutathione hydrolase-like"/>
    <property type="match status" value="1"/>
</dbReference>
<dbReference type="HAMAP" id="MF_00653">
    <property type="entry name" value="PQQ_syn_PqqB"/>
    <property type="match status" value="1"/>
</dbReference>
<dbReference type="InterPro" id="IPR001279">
    <property type="entry name" value="Metallo-B-lactamas"/>
</dbReference>
<dbReference type="InterPro" id="IPR011842">
    <property type="entry name" value="PQQ_synth_PqqB"/>
</dbReference>
<dbReference type="InterPro" id="IPR036866">
    <property type="entry name" value="RibonucZ/Hydroxyglut_hydro"/>
</dbReference>
<dbReference type="NCBIfam" id="TIGR02108">
    <property type="entry name" value="PQQ_syn_pqqB"/>
    <property type="match status" value="1"/>
</dbReference>
<dbReference type="PANTHER" id="PTHR42663:SF7">
    <property type="entry name" value="COENZYME PQQ SYNTHESIS PROTEIN B"/>
    <property type="match status" value="1"/>
</dbReference>
<dbReference type="PANTHER" id="PTHR42663">
    <property type="entry name" value="HYDROLASE C777.06C-RELATED-RELATED"/>
    <property type="match status" value="1"/>
</dbReference>
<dbReference type="Pfam" id="PF12706">
    <property type="entry name" value="Lactamase_B_2"/>
    <property type="match status" value="1"/>
</dbReference>
<dbReference type="SUPFAM" id="SSF56281">
    <property type="entry name" value="Metallo-hydrolase/oxidoreductase"/>
    <property type="match status" value="1"/>
</dbReference>
<sequence length="303" mass="33294">MYIQILGSAAGGGFPQWNCNCANCKGYRDGSLRATARTQSSIALSDDGVHWILCNASPDIRAQLQAFAPMQPARALRDTGINAIVLLDSQIDHTTGLLSLREGCPHQVWCTDMVHQDLTTGFPLFNMLSHWNGGLQWNLIELEGSFVIPACPNLRFTPFPLRSAAPPYSPHRFDPHPGDNLGLLVEDIRTGGKLFYAPGLGQVDDKLLAMMHGADCLLVDGTLWEDDEMQRRGVGTRTGREMGHLAQNGPGGMLEVLDGFPRQRKVLIHINNTNPILDEDSPERAEVQRRGVEVAFDGMSIEL</sequence>